<gene>
    <name evidence="1" type="primary">rpmJ</name>
    <name type="ordered locus">Pcar_0724</name>
</gene>
<sequence>MKVRASVKPICSKCKVVRRKGIVRIICENPKHKQKQG</sequence>
<protein>
    <recommendedName>
        <fullName evidence="1">Large ribosomal subunit protein bL36</fullName>
    </recommendedName>
    <alternativeName>
        <fullName evidence="2">50S ribosomal protein L36</fullName>
    </alternativeName>
</protein>
<name>RL36_SYNC1</name>
<comment type="similarity">
    <text evidence="1">Belongs to the bacterial ribosomal protein bL36 family.</text>
</comment>
<dbReference type="EMBL" id="CP000142">
    <property type="protein sequence ID" value="ABA87983.1"/>
    <property type="molecule type" value="Genomic_DNA"/>
</dbReference>
<dbReference type="RefSeq" id="WP_011340426.1">
    <property type="nucleotide sequence ID" value="NC_007498.2"/>
</dbReference>
<dbReference type="SMR" id="Q3A6M4"/>
<dbReference type="STRING" id="338963.Pcar_0724"/>
<dbReference type="KEGG" id="pca:Pcar_0724"/>
<dbReference type="eggNOG" id="COG0257">
    <property type="taxonomic scope" value="Bacteria"/>
</dbReference>
<dbReference type="HOGENOM" id="CLU_135723_6_2_7"/>
<dbReference type="OrthoDB" id="9802520at2"/>
<dbReference type="Proteomes" id="UP000002534">
    <property type="component" value="Chromosome"/>
</dbReference>
<dbReference type="GO" id="GO:0005737">
    <property type="term" value="C:cytoplasm"/>
    <property type="evidence" value="ECO:0007669"/>
    <property type="project" value="UniProtKB-ARBA"/>
</dbReference>
<dbReference type="GO" id="GO:1990904">
    <property type="term" value="C:ribonucleoprotein complex"/>
    <property type="evidence" value="ECO:0007669"/>
    <property type="project" value="UniProtKB-KW"/>
</dbReference>
<dbReference type="GO" id="GO:0005840">
    <property type="term" value="C:ribosome"/>
    <property type="evidence" value="ECO:0007669"/>
    <property type="project" value="UniProtKB-KW"/>
</dbReference>
<dbReference type="GO" id="GO:0003735">
    <property type="term" value="F:structural constituent of ribosome"/>
    <property type="evidence" value="ECO:0007669"/>
    <property type="project" value="InterPro"/>
</dbReference>
<dbReference type="GO" id="GO:0006412">
    <property type="term" value="P:translation"/>
    <property type="evidence" value="ECO:0007669"/>
    <property type="project" value="UniProtKB-UniRule"/>
</dbReference>
<dbReference type="HAMAP" id="MF_00251">
    <property type="entry name" value="Ribosomal_bL36"/>
    <property type="match status" value="1"/>
</dbReference>
<dbReference type="InterPro" id="IPR000473">
    <property type="entry name" value="Ribosomal_bL36"/>
</dbReference>
<dbReference type="InterPro" id="IPR035977">
    <property type="entry name" value="Ribosomal_bL36_sp"/>
</dbReference>
<dbReference type="NCBIfam" id="TIGR01022">
    <property type="entry name" value="rpmJ_bact"/>
    <property type="match status" value="1"/>
</dbReference>
<dbReference type="PANTHER" id="PTHR42888">
    <property type="entry name" value="50S RIBOSOMAL PROTEIN L36, CHLOROPLASTIC"/>
    <property type="match status" value="1"/>
</dbReference>
<dbReference type="PANTHER" id="PTHR42888:SF1">
    <property type="entry name" value="LARGE RIBOSOMAL SUBUNIT PROTEIN BL36C"/>
    <property type="match status" value="1"/>
</dbReference>
<dbReference type="Pfam" id="PF00444">
    <property type="entry name" value="Ribosomal_L36"/>
    <property type="match status" value="1"/>
</dbReference>
<dbReference type="SUPFAM" id="SSF57840">
    <property type="entry name" value="Ribosomal protein L36"/>
    <property type="match status" value="1"/>
</dbReference>
<dbReference type="PROSITE" id="PS00828">
    <property type="entry name" value="RIBOSOMAL_L36"/>
    <property type="match status" value="1"/>
</dbReference>
<evidence type="ECO:0000255" key="1">
    <source>
        <dbReference type="HAMAP-Rule" id="MF_00251"/>
    </source>
</evidence>
<evidence type="ECO:0000305" key="2"/>
<organism>
    <name type="scientific">Syntrophotalea carbinolica (strain DSM 2380 / NBRC 103641 / GraBd1)</name>
    <name type="common">Pelobacter carbinolicus</name>
    <dbReference type="NCBI Taxonomy" id="338963"/>
    <lineage>
        <taxon>Bacteria</taxon>
        <taxon>Pseudomonadati</taxon>
        <taxon>Thermodesulfobacteriota</taxon>
        <taxon>Desulfuromonadia</taxon>
        <taxon>Desulfuromonadales</taxon>
        <taxon>Syntrophotaleaceae</taxon>
        <taxon>Syntrophotalea</taxon>
    </lineage>
</organism>
<keyword id="KW-1185">Reference proteome</keyword>
<keyword id="KW-0687">Ribonucleoprotein</keyword>
<keyword id="KW-0689">Ribosomal protein</keyword>
<proteinExistence type="inferred from homology"/>
<feature type="chain" id="PRO_0000302263" description="Large ribosomal subunit protein bL36">
    <location>
        <begin position="1"/>
        <end position="37"/>
    </location>
</feature>
<accession>Q3A6M4</accession>
<reference key="1">
    <citation type="submission" date="2005-10" db="EMBL/GenBank/DDBJ databases">
        <title>Complete sequence of Pelobacter carbinolicus DSM 2380.</title>
        <authorList>
            <person name="Copeland A."/>
            <person name="Lucas S."/>
            <person name="Lapidus A."/>
            <person name="Barry K."/>
            <person name="Detter J.C."/>
            <person name="Glavina T."/>
            <person name="Hammon N."/>
            <person name="Israni S."/>
            <person name="Pitluck S."/>
            <person name="Chertkov O."/>
            <person name="Schmutz J."/>
            <person name="Larimer F."/>
            <person name="Land M."/>
            <person name="Kyrpides N."/>
            <person name="Ivanova N."/>
            <person name="Richardson P."/>
        </authorList>
    </citation>
    <scope>NUCLEOTIDE SEQUENCE [LARGE SCALE GENOMIC DNA]</scope>
    <source>
        <strain>DSM 2380 / NBRC 103641 / GraBd1</strain>
    </source>
</reference>